<accession>P16557</accession>
<accession>E0TVS4</accession>
<keyword id="KW-0119">Carbohydrate metabolism</keyword>
<keyword id="KW-0238">DNA-binding</keyword>
<keyword id="KW-0678">Repressor</keyword>
<keyword id="KW-0804">Transcription</keyword>
<keyword id="KW-0805">Transcription regulation</keyword>
<keyword id="KW-0859">Xylose metabolism</keyword>
<name>XYLR_BACSH</name>
<proteinExistence type="inferred from homology"/>
<dbReference type="EMBL" id="M27248">
    <property type="protein sequence ID" value="AAA22896.1"/>
    <property type="molecule type" value="Genomic_DNA"/>
</dbReference>
<dbReference type="EMBL" id="CP002183">
    <property type="protein sequence ID" value="ADM37850.1"/>
    <property type="molecule type" value="Genomic_DNA"/>
</dbReference>
<dbReference type="PIR" id="A32885">
    <property type="entry name" value="A32885"/>
</dbReference>
<dbReference type="SMR" id="P16557"/>
<dbReference type="KEGG" id="bss:BSUW23_09020"/>
<dbReference type="HOGENOM" id="CLU_036604_13_2_9"/>
<dbReference type="Proteomes" id="UP000002233">
    <property type="component" value="Chromosome"/>
</dbReference>
<dbReference type="GO" id="GO:0003677">
    <property type="term" value="F:DNA binding"/>
    <property type="evidence" value="ECO:0007669"/>
    <property type="project" value="UniProtKB-KW"/>
</dbReference>
<dbReference type="GO" id="GO:0042732">
    <property type="term" value="P:D-xylose metabolic process"/>
    <property type="evidence" value="ECO:0007669"/>
    <property type="project" value="UniProtKB-KW"/>
</dbReference>
<dbReference type="CDD" id="cd24076">
    <property type="entry name" value="ASKHA_ATPase_ROK_BsXylR-like"/>
    <property type="match status" value="1"/>
</dbReference>
<dbReference type="Gene3D" id="3.30.420.40">
    <property type="match status" value="2"/>
</dbReference>
<dbReference type="Gene3D" id="1.10.10.10">
    <property type="entry name" value="Winged helix-like DNA-binding domain superfamily/Winged helix DNA-binding domain"/>
    <property type="match status" value="1"/>
</dbReference>
<dbReference type="InterPro" id="IPR043129">
    <property type="entry name" value="ATPase_NBD"/>
</dbReference>
<dbReference type="InterPro" id="IPR000600">
    <property type="entry name" value="ROK"/>
</dbReference>
<dbReference type="InterPro" id="IPR049874">
    <property type="entry name" value="ROK_cs"/>
</dbReference>
<dbReference type="InterPro" id="IPR036388">
    <property type="entry name" value="WH-like_DNA-bd_sf"/>
</dbReference>
<dbReference type="InterPro" id="IPR036390">
    <property type="entry name" value="WH_DNA-bd_sf"/>
</dbReference>
<dbReference type="PANTHER" id="PTHR18964:SF149">
    <property type="entry name" value="BIFUNCTIONAL UDP-N-ACETYLGLUCOSAMINE 2-EPIMERASE_N-ACETYLMANNOSAMINE KINASE"/>
    <property type="match status" value="1"/>
</dbReference>
<dbReference type="PANTHER" id="PTHR18964">
    <property type="entry name" value="ROK (REPRESSOR, ORF, KINASE) FAMILY"/>
    <property type="match status" value="1"/>
</dbReference>
<dbReference type="Pfam" id="PF13412">
    <property type="entry name" value="HTH_24"/>
    <property type="match status" value="1"/>
</dbReference>
<dbReference type="Pfam" id="PF00480">
    <property type="entry name" value="ROK"/>
    <property type="match status" value="1"/>
</dbReference>
<dbReference type="SUPFAM" id="SSF53067">
    <property type="entry name" value="Actin-like ATPase domain"/>
    <property type="match status" value="1"/>
</dbReference>
<dbReference type="SUPFAM" id="SSF46785">
    <property type="entry name" value="Winged helix' DNA-binding domain"/>
    <property type="match status" value="1"/>
</dbReference>
<dbReference type="PROSITE" id="PS01125">
    <property type="entry name" value="ROK"/>
    <property type="match status" value="1"/>
</dbReference>
<gene>
    <name type="primary">xylR</name>
    <name type="ordered locus">BSUW23_09020</name>
</gene>
<reference key="1">
    <citation type="journal article" date="1989" name="J. Bacteriol.">
        <title>Identification and sequence analysis of the Bacillus subtilis W23 xylR gene and xyl operator.</title>
        <authorList>
            <person name="Kreuzer P."/>
            <person name="Gaertner D."/>
            <person name="Allmansberger R."/>
            <person name="Hillen W."/>
        </authorList>
    </citation>
    <scope>NUCLEOTIDE SEQUENCE [GENOMIC DNA]</scope>
    <source>
        <strain>ATCC 23059 / NRRL B-14472 / W23</strain>
    </source>
</reference>
<reference key="2">
    <citation type="journal article" date="2011" name="Microbiology">
        <title>The genome sequence of Bacillus subtilis subsp. spizizenii W23: insights into speciation within the B. subtilis complex and into the history of B. subtilis genetics.</title>
        <authorList>
            <person name="Zeigler D.R."/>
        </authorList>
    </citation>
    <scope>NUCLEOTIDE SEQUENCE [LARGE SCALE GENOMIC DNA]</scope>
    <source>
        <strain>ATCC 23059 / NRRL B-14472 / W23</strain>
    </source>
</reference>
<comment type="function">
    <text>Transcriptional repressor of xylose-utilizing enzymes.</text>
</comment>
<comment type="similarity">
    <text evidence="2">Belongs to the ROK (NagC/XylR) family.</text>
</comment>
<protein>
    <recommendedName>
        <fullName>Xylose repressor</fullName>
    </recommendedName>
</protein>
<feature type="chain" id="PRO_0000095711" description="Xylose repressor">
    <location>
        <begin position="1"/>
        <end position="384"/>
    </location>
</feature>
<feature type="DNA-binding region" description="H-T-H motif" evidence="1">
    <location>
        <begin position="29"/>
        <end position="48"/>
    </location>
</feature>
<evidence type="ECO:0000250" key="1"/>
<evidence type="ECO:0000305" key="2"/>
<sequence length="384" mass="42296">MDIADQTFVKKVNQKLLLKEILKNSPISRAKLSEMTGLNKSTVSSQVNTLMKENLVFEIGQGQSSGGRRPVMLVFNKKAGYSIGIDVGVDYISGILTDLEGTIILDQHHHLESNSPEITKDILIDMIHHFITRMPQSPYGLIGIGICVPGLIDKNQKIVFTPNSNWRDIDLKSFIQEKFNVPVFIENEANAGAYGEKVFGAAKNHNNIIYASISTGIGIGVIINNHLYRGVSGFSGEMGHMTIDFNGPKCSCGNRGCWELYASEKALLKSLQTKEKKVSYQDIIDLAHLNDIGTLNALQNFGFYLGIGLTNILNTFNPQAIILRNSIIESHPMVLNSIRSEVSSRVYPQLGNSYELLPSSLGKNAPALGMSSIVIEHFLDIVKM</sequence>
<organism>
    <name type="scientific">Bacillus spizizenii (strain ATCC 23059 / NRRL B-14472 / W23)</name>
    <name type="common">Bacillus subtilis subsp. spizizenii</name>
    <dbReference type="NCBI Taxonomy" id="655816"/>
    <lineage>
        <taxon>Bacteria</taxon>
        <taxon>Bacillati</taxon>
        <taxon>Bacillota</taxon>
        <taxon>Bacilli</taxon>
        <taxon>Bacillales</taxon>
        <taxon>Bacillaceae</taxon>
        <taxon>Bacillus</taxon>
    </lineage>
</organism>